<proteinExistence type="inferred from homology"/>
<reference key="1">
    <citation type="journal article" date="2005" name="J. Infect. Dis.">
        <title>Genome sequence of a serotype M28 strain of group A Streptococcus: potential new insights into puerperal sepsis and bacterial disease specificity.</title>
        <authorList>
            <person name="Green N.M."/>
            <person name="Zhang S."/>
            <person name="Porcella S.F."/>
            <person name="Nagiec M.J."/>
            <person name="Barbian K.D."/>
            <person name="Beres S.B."/>
            <person name="Lefebvre R.B."/>
            <person name="Musser J.M."/>
        </authorList>
    </citation>
    <scope>NUCLEOTIDE SEQUENCE [LARGE SCALE GENOMIC DNA]</scope>
    <source>
        <strain>MGAS6180</strain>
    </source>
</reference>
<sequence>MILTVTLNPAIDVSYPLNELKCDTVNRVVDVTKTPGGKGLNVSRVLNDFGETVKATGCIGGESGDFIINHLPDSILSRFYKISGDTRTCIAILHEGNQTEILEKGPLLSVDEIDGFTHHFKYLLNDVDVVTLSGSLPAGMPDDYYQKLIKIANLNGKKTVLDCSGNALEAVLKGDSKPTVIKPNLEELSQLLGKEMTKDFEALKEVLQDELFEGIEWIIVSLGADGVFAKHKDTFYNVDIPKIKIVSAVGSGDSTVAGIASGLANDEDDRALLTKANVLGMLNAQEKTTGHVNMANYDKLYQSIKVKEV</sequence>
<gene>
    <name evidence="1" type="primary">lacC</name>
    <name type="ordered locus">M28_Spy1626</name>
</gene>
<protein>
    <recommendedName>
        <fullName evidence="1">Tagatose-6-phosphate kinase</fullName>
        <ecNumber evidence="1">2.7.1.144</ecNumber>
    </recommendedName>
    <alternativeName>
        <fullName evidence="1">Phosphotagatokinase</fullName>
    </alternativeName>
</protein>
<dbReference type="EC" id="2.7.1.144" evidence="1"/>
<dbReference type="EMBL" id="CP000056">
    <property type="protein sequence ID" value="AAX72736.1"/>
    <property type="molecule type" value="Genomic_DNA"/>
</dbReference>
<dbReference type="RefSeq" id="WP_011285169.1">
    <property type="nucleotide sequence ID" value="NC_007296.2"/>
</dbReference>
<dbReference type="SMR" id="Q48RC4"/>
<dbReference type="KEGG" id="spb:M28_Spy1626"/>
<dbReference type="HOGENOM" id="CLU_050013_5_0_9"/>
<dbReference type="UniPathway" id="UPA00704">
    <property type="reaction ID" value="UER00715"/>
</dbReference>
<dbReference type="GO" id="GO:0005829">
    <property type="term" value="C:cytosol"/>
    <property type="evidence" value="ECO:0007669"/>
    <property type="project" value="TreeGrafter"/>
</dbReference>
<dbReference type="GO" id="GO:0005524">
    <property type="term" value="F:ATP binding"/>
    <property type="evidence" value="ECO:0007669"/>
    <property type="project" value="UniProtKB-KW"/>
</dbReference>
<dbReference type="GO" id="GO:0008443">
    <property type="term" value="F:phosphofructokinase activity"/>
    <property type="evidence" value="ECO:0007669"/>
    <property type="project" value="TreeGrafter"/>
</dbReference>
<dbReference type="GO" id="GO:0009024">
    <property type="term" value="F:tagatose-6-phosphate kinase activity"/>
    <property type="evidence" value="ECO:0007669"/>
    <property type="project" value="UniProtKB-UniRule"/>
</dbReference>
<dbReference type="GO" id="GO:2001059">
    <property type="term" value="P:D-tagatose 6-phosphate catabolic process"/>
    <property type="evidence" value="ECO:0007669"/>
    <property type="project" value="UniProtKB-UniRule"/>
</dbReference>
<dbReference type="GO" id="GO:0019512">
    <property type="term" value="P:lactose catabolic process via tagatose-6-phosphate"/>
    <property type="evidence" value="ECO:0007669"/>
    <property type="project" value="InterPro"/>
</dbReference>
<dbReference type="CDD" id="cd01164">
    <property type="entry name" value="FruK_PfkB_like"/>
    <property type="match status" value="1"/>
</dbReference>
<dbReference type="FunFam" id="3.40.1190.20:FF:000001">
    <property type="entry name" value="Phosphofructokinase"/>
    <property type="match status" value="1"/>
</dbReference>
<dbReference type="Gene3D" id="3.40.1190.20">
    <property type="match status" value="1"/>
</dbReference>
<dbReference type="HAMAP" id="MF_01557">
    <property type="entry name" value="LacC"/>
    <property type="match status" value="1"/>
</dbReference>
<dbReference type="InterPro" id="IPR002173">
    <property type="entry name" value="Carboh/pur_kinase_PfkB_CS"/>
</dbReference>
<dbReference type="InterPro" id="IPR005926">
    <property type="entry name" value="LacC"/>
</dbReference>
<dbReference type="InterPro" id="IPR011611">
    <property type="entry name" value="PfkB_dom"/>
</dbReference>
<dbReference type="InterPro" id="IPR029056">
    <property type="entry name" value="Ribokinase-like"/>
</dbReference>
<dbReference type="InterPro" id="IPR017583">
    <property type="entry name" value="Tagatose/fructose_Pkinase"/>
</dbReference>
<dbReference type="NCBIfam" id="TIGR03168">
    <property type="entry name" value="1-PFK"/>
    <property type="match status" value="1"/>
</dbReference>
<dbReference type="NCBIfam" id="TIGR01231">
    <property type="entry name" value="lacC"/>
    <property type="match status" value="1"/>
</dbReference>
<dbReference type="NCBIfam" id="NF010033">
    <property type="entry name" value="PRK13508.1"/>
    <property type="match status" value="1"/>
</dbReference>
<dbReference type="PANTHER" id="PTHR46566:SF5">
    <property type="entry name" value="1-PHOSPHOFRUCTOKINASE"/>
    <property type="match status" value="1"/>
</dbReference>
<dbReference type="PANTHER" id="PTHR46566">
    <property type="entry name" value="1-PHOSPHOFRUCTOKINASE-RELATED"/>
    <property type="match status" value="1"/>
</dbReference>
<dbReference type="Pfam" id="PF00294">
    <property type="entry name" value="PfkB"/>
    <property type="match status" value="1"/>
</dbReference>
<dbReference type="PIRSF" id="PIRSF000535">
    <property type="entry name" value="1PFK/6PFK/LacC"/>
    <property type="match status" value="1"/>
</dbReference>
<dbReference type="SUPFAM" id="SSF53613">
    <property type="entry name" value="Ribokinase-like"/>
    <property type="match status" value="1"/>
</dbReference>
<dbReference type="PROSITE" id="PS00583">
    <property type="entry name" value="PFKB_KINASES_1"/>
    <property type="match status" value="1"/>
</dbReference>
<comment type="catalytic activity">
    <reaction evidence="1">
        <text>D-tagatofuranose 6-phosphate + ATP = D-tagatofuranose 1,6-bisphosphate + ADP + H(+)</text>
        <dbReference type="Rhea" id="RHEA:12420"/>
        <dbReference type="ChEBI" id="CHEBI:15378"/>
        <dbReference type="ChEBI" id="CHEBI:30616"/>
        <dbReference type="ChEBI" id="CHEBI:58694"/>
        <dbReference type="ChEBI" id="CHEBI:58695"/>
        <dbReference type="ChEBI" id="CHEBI:456216"/>
        <dbReference type="EC" id="2.7.1.144"/>
    </reaction>
</comment>
<comment type="pathway">
    <text evidence="1">Carbohydrate metabolism; D-tagatose 6-phosphate degradation; D-glyceraldehyde 3-phosphate and glycerone phosphate from D-tagatose 6-phosphate: step 1/2.</text>
</comment>
<comment type="similarity">
    <text evidence="1">Belongs to the carbohydrate kinase PfkB family. LacC subfamily.</text>
</comment>
<feature type="chain" id="PRO_0000203935" description="Tagatose-6-phosphate kinase">
    <location>
        <begin position="1"/>
        <end position="309"/>
    </location>
</feature>
<organism>
    <name type="scientific">Streptococcus pyogenes serotype M28 (strain MGAS6180)</name>
    <dbReference type="NCBI Taxonomy" id="319701"/>
    <lineage>
        <taxon>Bacteria</taxon>
        <taxon>Bacillati</taxon>
        <taxon>Bacillota</taxon>
        <taxon>Bacilli</taxon>
        <taxon>Lactobacillales</taxon>
        <taxon>Streptococcaceae</taxon>
        <taxon>Streptococcus</taxon>
    </lineage>
</organism>
<accession>Q48RC4</accession>
<keyword id="KW-0067">ATP-binding</keyword>
<keyword id="KW-0418">Kinase</keyword>
<keyword id="KW-0423">Lactose metabolism</keyword>
<keyword id="KW-0547">Nucleotide-binding</keyword>
<keyword id="KW-0808">Transferase</keyword>
<name>LACC_STRPM</name>
<evidence type="ECO:0000255" key="1">
    <source>
        <dbReference type="HAMAP-Rule" id="MF_01557"/>
    </source>
</evidence>